<name>URE2_STAA9</name>
<evidence type="ECO:0000255" key="1">
    <source>
        <dbReference type="HAMAP-Rule" id="MF_01954"/>
    </source>
</evidence>
<reference key="1">
    <citation type="submission" date="2007-05" db="EMBL/GenBank/DDBJ databases">
        <title>Complete sequence of chromosome of Staphylococcus aureus subsp. aureus JH9.</title>
        <authorList>
            <consortium name="US DOE Joint Genome Institute"/>
            <person name="Copeland A."/>
            <person name="Lucas S."/>
            <person name="Lapidus A."/>
            <person name="Barry K."/>
            <person name="Detter J.C."/>
            <person name="Glavina del Rio T."/>
            <person name="Hammon N."/>
            <person name="Israni S."/>
            <person name="Pitluck S."/>
            <person name="Chain P."/>
            <person name="Malfatti S."/>
            <person name="Shin M."/>
            <person name="Vergez L."/>
            <person name="Schmutz J."/>
            <person name="Larimer F."/>
            <person name="Land M."/>
            <person name="Hauser L."/>
            <person name="Kyrpides N."/>
            <person name="Kim E."/>
            <person name="Tomasz A."/>
            <person name="Richardson P."/>
        </authorList>
    </citation>
    <scope>NUCLEOTIDE SEQUENCE [LARGE SCALE GENOMIC DNA]</scope>
    <source>
        <strain>JH9</strain>
    </source>
</reference>
<feature type="chain" id="PRO_1000088511" description="Urease subunit beta">
    <location>
        <begin position="1"/>
        <end position="136"/>
    </location>
</feature>
<dbReference type="EC" id="3.5.1.5" evidence="1"/>
<dbReference type="EMBL" id="CP000703">
    <property type="protein sequence ID" value="ABQ50093.1"/>
    <property type="molecule type" value="Genomic_DNA"/>
</dbReference>
<dbReference type="RefSeq" id="WP_000612126.1">
    <property type="nucleotide sequence ID" value="NC_009487.1"/>
</dbReference>
<dbReference type="SMR" id="A5IV70"/>
<dbReference type="KEGG" id="saj:SaurJH9_2313"/>
<dbReference type="HOGENOM" id="CLU_129707_2_2_9"/>
<dbReference type="UniPathway" id="UPA00258">
    <property type="reaction ID" value="UER00370"/>
</dbReference>
<dbReference type="GO" id="GO:0035550">
    <property type="term" value="C:urease complex"/>
    <property type="evidence" value="ECO:0007669"/>
    <property type="project" value="InterPro"/>
</dbReference>
<dbReference type="GO" id="GO:0009039">
    <property type="term" value="F:urease activity"/>
    <property type="evidence" value="ECO:0007669"/>
    <property type="project" value="UniProtKB-UniRule"/>
</dbReference>
<dbReference type="GO" id="GO:0043419">
    <property type="term" value="P:urea catabolic process"/>
    <property type="evidence" value="ECO:0007669"/>
    <property type="project" value="UniProtKB-UniRule"/>
</dbReference>
<dbReference type="CDD" id="cd00407">
    <property type="entry name" value="Urease_beta"/>
    <property type="match status" value="1"/>
</dbReference>
<dbReference type="FunFam" id="2.10.150.10:FF:000001">
    <property type="entry name" value="Urease subunit beta"/>
    <property type="match status" value="1"/>
</dbReference>
<dbReference type="Gene3D" id="2.10.150.10">
    <property type="entry name" value="Urease, beta subunit"/>
    <property type="match status" value="1"/>
</dbReference>
<dbReference type="HAMAP" id="MF_01954">
    <property type="entry name" value="Urease_beta"/>
    <property type="match status" value="1"/>
</dbReference>
<dbReference type="InterPro" id="IPR002019">
    <property type="entry name" value="Urease_beta-like"/>
</dbReference>
<dbReference type="InterPro" id="IPR036461">
    <property type="entry name" value="Urease_betasu_sf"/>
</dbReference>
<dbReference type="InterPro" id="IPR050069">
    <property type="entry name" value="Urease_subunit"/>
</dbReference>
<dbReference type="NCBIfam" id="NF009682">
    <property type="entry name" value="PRK13203.1"/>
    <property type="match status" value="1"/>
</dbReference>
<dbReference type="NCBIfam" id="TIGR00192">
    <property type="entry name" value="urease_beta"/>
    <property type="match status" value="1"/>
</dbReference>
<dbReference type="PANTHER" id="PTHR33569">
    <property type="entry name" value="UREASE"/>
    <property type="match status" value="1"/>
</dbReference>
<dbReference type="PANTHER" id="PTHR33569:SF1">
    <property type="entry name" value="UREASE"/>
    <property type="match status" value="1"/>
</dbReference>
<dbReference type="Pfam" id="PF00699">
    <property type="entry name" value="Urease_beta"/>
    <property type="match status" value="1"/>
</dbReference>
<dbReference type="SUPFAM" id="SSF51278">
    <property type="entry name" value="Urease, beta-subunit"/>
    <property type="match status" value="1"/>
</dbReference>
<gene>
    <name evidence="1" type="primary">ureB</name>
    <name type="ordered locus">SaurJH9_2313</name>
</gene>
<keyword id="KW-0963">Cytoplasm</keyword>
<keyword id="KW-0378">Hydrolase</keyword>
<accession>A5IV70</accession>
<protein>
    <recommendedName>
        <fullName evidence="1">Urease subunit beta</fullName>
        <ecNumber evidence="1">3.5.1.5</ecNumber>
    </recommendedName>
    <alternativeName>
        <fullName evidence="1">Urea amidohydrolase subunit beta</fullName>
    </alternativeName>
</protein>
<organism>
    <name type="scientific">Staphylococcus aureus (strain JH9)</name>
    <dbReference type="NCBI Taxonomy" id="359786"/>
    <lineage>
        <taxon>Bacteria</taxon>
        <taxon>Bacillati</taxon>
        <taxon>Bacillota</taxon>
        <taxon>Bacilli</taxon>
        <taxon>Bacillales</taxon>
        <taxon>Staphylococcaceae</taxon>
        <taxon>Staphylococcus</taxon>
    </lineage>
</organism>
<proteinExistence type="inferred from homology"/>
<comment type="catalytic activity">
    <reaction evidence="1">
        <text>urea + 2 H2O + H(+) = hydrogencarbonate + 2 NH4(+)</text>
        <dbReference type="Rhea" id="RHEA:20557"/>
        <dbReference type="ChEBI" id="CHEBI:15377"/>
        <dbReference type="ChEBI" id="CHEBI:15378"/>
        <dbReference type="ChEBI" id="CHEBI:16199"/>
        <dbReference type="ChEBI" id="CHEBI:17544"/>
        <dbReference type="ChEBI" id="CHEBI:28938"/>
        <dbReference type="EC" id="3.5.1.5"/>
    </reaction>
</comment>
<comment type="pathway">
    <text evidence="1">Nitrogen metabolism; urea degradation; CO(2) and NH(3) from urea (urease route): step 1/1.</text>
</comment>
<comment type="subunit">
    <text evidence="1">Heterotrimer of UreA (gamma), UreB (beta) and UreC (alpha) subunits. Three heterotrimers associate to form the active enzyme.</text>
</comment>
<comment type="subcellular location">
    <subcellularLocation>
        <location evidence="1">Cytoplasm</location>
    </subcellularLocation>
</comment>
<comment type="similarity">
    <text evidence="1">Belongs to the urease beta subunit family.</text>
</comment>
<sequence>MIPGEIITKSTEVEINNHHPETVIEVENTGDRPIQVGSHFHFYEANAALDFEREMAYGKHLDIPAGAAVRFEPGDKKEVQLVEYAGKRKIFGFRGMVNGPIDESRVYRPTDENDAYAGVFGDNGAENVNKKGGKRS</sequence>